<keyword id="KW-0963">Cytoplasm</keyword>
<keyword id="KW-0489">Methyltransferase</keyword>
<keyword id="KW-0698">rRNA processing</keyword>
<keyword id="KW-0949">S-adenosyl-L-methionine</keyword>
<keyword id="KW-0808">Transferase</keyword>
<reference key="1">
    <citation type="journal article" date="2008" name="J. Bacteriol.">
        <title>Comparative genome sequence analysis of multidrug-resistant Acinetobacter baumannii.</title>
        <authorList>
            <person name="Adams M.D."/>
            <person name="Goglin K."/>
            <person name="Molyneaux N."/>
            <person name="Hujer K.M."/>
            <person name="Lavender H."/>
            <person name="Jamison J.J."/>
            <person name="MacDonald I.J."/>
            <person name="Martin K.M."/>
            <person name="Russo T."/>
            <person name="Campagnari A.A."/>
            <person name="Hujer A.M."/>
            <person name="Bonomo R.A."/>
            <person name="Gill S.R."/>
        </authorList>
    </citation>
    <scope>NUCLEOTIDE SEQUENCE [LARGE SCALE GENOMIC DNA]</scope>
    <source>
        <strain>AB0057</strain>
    </source>
</reference>
<evidence type="ECO:0000255" key="1">
    <source>
        <dbReference type="HAMAP-Rule" id="MF_01007"/>
    </source>
</evidence>
<dbReference type="EC" id="2.1.1.199" evidence="1"/>
<dbReference type="EMBL" id="CP001182">
    <property type="protein sequence ID" value="ACJ43018.1"/>
    <property type="molecule type" value="Genomic_DNA"/>
</dbReference>
<dbReference type="RefSeq" id="WP_000018348.1">
    <property type="nucleotide sequence ID" value="NC_011586.2"/>
</dbReference>
<dbReference type="SMR" id="B7IAX1"/>
<dbReference type="KEGG" id="abn:AB57_3657"/>
<dbReference type="HOGENOM" id="CLU_038422_2_0_6"/>
<dbReference type="Proteomes" id="UP000007094">
    <property type="component" value="Chromosome"/>
</dbReference>
<dbReference type="GO" id="GO:0005737">
    <property type="term" value="C:cytoplasm"/>
    <property type="evidence" value="ECO:0007669"/>
    <property type="project" value="UniProtKB-SubCell"/>
</dbReference>
<dbReference type="GO" id="GO:0071424">
    <property type="term" value="F:rRNA (cytosine-N4-)-methyltransferase activity"/>
    <property type="evidence" value="ECO:0007669"/>
    <property type="project" value="UniProtKB-UniRule"/>
</dbReference>
<dbReference type="GO" id="GO:0070475">
    <property type="term" value="P:rRNA base methylation"/>
    <property type="evidence" value="ECO:0007669"/>
    <property type="project" value="UniProtKB-UniRule"/>
</dbReference>
<dbReference type="CDD" id="cd02440">
    <property type="entry name" value="AdoMet_MTases"/>
    <property type="match status" value="1"/>
</dbReference>
<dbReference type="FunFam" id="1.10.150.170:FF:000001">
    <property type="entry name" value="Ribosomal RNA small subunit methyltransferase H"/>
    <property type="match status" value="1"/>
</dbReference>
<dbReference type="Gene3D" id="1.10.150.170">
    <property type="entry name" value="Putative methyltransferase TM0872, insert domain"/>
    <property type="match status" value="1"/>
</dbReference>
<dbReference type="Gene3D" id="3.40.50.150">
    <property type="entry name" value="Vaccinia Virus protein VP39"/>
    <property type="match status" value="1"/>
</dbReference>
<dbReference type="HAMAP" id="MF_01007">
    <property type="entry name" value="16SrRNA_methyltr_H"/>
    <property type="match status" value="1"/>
</dbReference>
<dbReference type="InterPro" id="IPR002903">
    <property type="entry name" value="RsmH"/>
</dbReference>
<dbReference type="InterPro" id="IPR023397">
    <property type="entry name" value="SAM-dep_MeTrfase_MraW_recog"/>
</dbReference>
<dbReference type="InterPro" id="IPR029063">
    <property type="entry name" value="SAM-dependent_MTases_sf"/>
</dbReference>
<dbReference type="NCBIfam" id="TIGR00006">
    <property type="entry name" value="16S rRNA (cytosine(1402)-N(4))-methyltransferase RsmH"/>
    <property type="match status" value="1"/>
</dbReference>
<dbReference type="PANTHER" id="PTHR11265:SF0">
    <property type="entry name" value="12S RRNA N4-METHYLCYTIDINE METHYLTRANSFERASE"/>
    <property type="match status" value="1"/>
</dbReference>
<dbReference type="PANTHER" id="PTHR11265">
    <property type="entry name" value="S-ADENOSYL-METHYLTRANSFERASE MRAW"/>
    <property type="match status" value="1"/>
</dbReference>
<dbReference type="Pfam" id="PF01795">
    <property type="entry name" value="Methyltransf_5"/>
    <property type="match status" value="1"/>
</dbReference>
<dbReference type="PIRSF" id="PIRSF004486">
    <property type="entry name" value="MraW"/>
    <property type="match status" value="1"/>
</dbReference>
<dbReference type="SUPFAM" id="SSF81799">
    <property type="entry name" value="Putative methyltransferase TM0872, insert domain"/>
    <property type="match status" value="1"/>
</dbReference>
<dbReference type="SUPFAM" id="SSF53335">
    <property type="entry name" value="S-adenosyl-L-methionine-dependent methyltransferases"/>
    <property type="match status" value="1"/>
</dbReference>
<comment type="function">
    <text evidence="1">Specifically methylates the N4 position of cytidine in position 1402 (C1402) of 16S rRNA.</text>
</comment>
<comment type="catalytic activity">
    <reaction evidence="1">
        <text>cytidine(1402) in 16S rRNA + S-adenosyl-L-methionine = N(4)-methylcytidine(1402) in 16S rRNA + S-adenosyl-L-homocysteine + H(+)</text>
        <dbReference type="Rhea" id="RHEA:42928"/>
        <dbReference type="Rhea" id="RHEA-COMP:10286"/>
        <dbReference type="Rhea" id="RHEA-COMP:10287"/>
        <dbReference type="ChEBI" id="CHEBI:15378"/>
        <dbReference type="ChEBI" id="CHEBI:57856"/>
        <dbReference type="ChEBI" id="CHEBI:59789"/>
        <dbReference type="ChEBI" id="CHEBI:74506"/>
        <dbReference type="ChEBI" id="CHEBI:82748"/>
        <dbReference type="EC" id="2.1.1.199"/>
    </reaction>
</comment>
<comment type="subcellular location">
    <subcellularLocation>
        <location evidence="1">Cytoplasm</location>
    </subcellularLocation>
</comment>
<comment type="similarity">
    <text evidence="1">Belongs to the methyltransferase superfamily. RsmH family.</text>
</comment>
<name>RSMH_ACIB5</name>
<feature type="chain" id="PRO_0000386688" description="Ribosomal RNA small subunit methyltransferase H">
    <location>
        <begin position="1"/>
        <end position="307"/>
    </location>
</feature>
<feature type="binding site" evidence="1">
    <location>
        <begin position="32"/>
        <end position="34"/>
    </location>
    <ligand>
        <name>S-adenosyl-L-methionine</name>
        <dbReference type="ChEBI" id="CHEBI:59789"/>
    </ligand>
</feature>
<feature type="binding site" evidence="1">
    <location>
        <position position="52"/>
    </location>
    <ligand>
        <name>S-adenosyl-L-methionine</name>
        <dbReference type="ChEBI" id="CHEBI:59789"/>
    </ligand>
</feature>
<feature type="binding site" evidence="1">
    <location>
        <position position="78"/>
    </location>
    <ligand>
        <name>S-adenosyl-L-methionine</name>
        <dbReference type="ChEBI" id="CHEBI:59789"/>
    </ligand>
</feature>
<feature type="binding site" evidence="1">
    <location>
        <position position="99"/>
    </location>
    <ligand>
        <name>S-adenosyl-L-methionine</name>
        <dbReference type="ChEBI" id="CHEBI:59789"/>
    </ligand>
</feature>
<feature type="binding site" evidence="1">
    <location>
        <position position="106"/>
    </location>
    <ligand>
        <name>S-adenosyl-L-methionine</name>
        <dbReference type="ChEBI" id="CHEBI:59789"/>
    </ligand>
</feature>
<protein>
    <recommendedName>
        <fullName evidence="1">Ribosomal RNA small subunit methyltransferase H</fullName>
        <ecNumber evidence="1">2.1.1.199</ecNumber>
    </recommendedName>
    <alternativeName>
        <fullName evidence="1">16S rRNA m(4)C1402 methyltransferase</fullName>
    </alternativeName>
    <alternativeName>
        <fullName evidence="1">rRNA (cytosine-N(4)-)-methyltransferase RsmH</fullName>
    </alternativeName>
</protein>
<sequence length="307" mass="34714">MSHISVLLFETVESLLADRTTGVYIDATFGRGGHTRLLLSKLDENARVYAFDKDPQALEVAAALAQEDPRFTIIHASFADIKEKMQEIGVQSVDGIMADLGVSSPQLDQAERGFSFMQDGPLDMRMDNSKGLTADEWLLEVEEEDLANIIYQYGEERYSRRIARAIKQAGKLDTTAQLAEIVKTAHPKWEKHKHPATRTFQAIRIAINKELDDIEVFLPQAVDLLKPKGRLSVISFHSLEDRLIKQFIQKESTLAEDSGWGMPQQQVDTRRLKKISRVRASEEEVKANPRSRSAWLRVAERLEQKGA</sequence>
<accession>B7IAX1</accession>
<proteinExistence type="inferred from homology"/>
<organism>
    <name type="scientific">Acinetobacter baumannii (strain AB0057)</name>
    <dbReference type="NCBI Taxonomy" id="480119"/>
    <lineage>
        <taxon>Bacteria</taxon>
        <taxon>Pseudomonadati</taxon>
        <taxon>Pseudomonadota</taxon>
        <taxon>Gammaproteobacteria</taxon>
        <taxon>Moraxellales</taxon>
        <taxon>Moraxellaceae</taxon>
        <taxon>Acinetobacter</taxon>
        <taxon>Acinetobacter calcoaceticus/baumannii complex</taxon>
    </lineage>
</organism>
<gene>
    <name evidence="1" type="primary">rsmH</name>
    <name type="synonym">mraW</name>
    <name type="ordered locus">AB57_3657</name>
</gene>